<proteinExistence type="inferred from homology"/>
<accession>Q318N6</accession>
<dbReference type="EMBL" id="CP000111">
    <property type="protein sequence ID" value="ABB50659.1"/>
    <property type="molecule type" value="Genomic_DNA"/>
</dbReference>
<dbReference type="RefSeq" id="WP_011377141.1">
    <property type="nucleotide sequence ID" value="NC_007577.1"/>
</dbReference>
<dbReference type="SMR" id="Q318N6"/>
<dbReference type="STRING" id="74546.PMT9312_1599"/>
<dbReference type="KEGG" id="pmi:PMT9312_1599"/>
<dbReference type="eggNOG" id="COG0051">
    <property type="taxonomic scope" value="Bacteria"/>
</dbReference>
<dbReference type="HOGENOM" id="CLU_122625_1_3_3"/>
<dbReference type="OrthoDB" id="9804464at2"/>
<dbReference type="Proteomes" id="UP000002715">
    <property type="component" value="Chromosome"/>
</dbReference>
<dbReference type="GO" id="GO:1990904">
    <property type="term" value="C:ribonucleoprotein complex"/>
    <property type="evidence" value="ECO:0007669"/>
    <property type="project" value="UniProtKB-KW"/>
</dbReference>
<dbReference type="GO" id="GO:0005840">
    <property type="term" value="C:ribosome"/>
    <property type="evidence" value="ECO:0007669"/>
    <property type="project" value="UniProtKB-KW"/>
</dbReference>
<dbReference type="GO" id="GO:0003735">
    <property type="term" value="F:structural constituent of ribosome"/>
    <property type="evidence" value="ECO:0007669"/>
    <property type="project" value="InterPro"/>
</dbReference>
<dbReference type="GO" id="GO:0000049">
    <property type="term" value="F:tRNA binding"/>
    <property type="evidence" value="ECO:0007669"/>
    <property type="project" value="UniProtKB-UniRule"/>
</dbReference>
<dbReference type="GO" id="GO:0006412">
    <property type="term" value="P:translation"/>
    <property type="evidence" value="ECO:0007669"/>
    <property type="project" value="UniProtKB-UniRule"/>
</dbReference>
<dbReference type="FunFam" id="3.30.70.600:FF:000001">
    <property type="entry name" value="30S ribosomal protein S10"/>
    <property type="match status" value="1"/>
</dbReference>
<dbReference type="Gene3D" id="3.30.70.600">
    <property type="entry name" value="Ribosomal protein S10 domain"/>
    <property type="match status" value="1"/>
</dbReference>
<dbReference type="HAMAP" id="MF_00508">
    <property type="entry name" value="Ribosomal_uS10"/>
    <property type="match status" value="1"/>
</dbReference>
<dbReference type="InterPro" id="IPR001848">
    <property type="entry name" value="Ribosomal_uS10"/>
</dbReference>
<dbReference type="InterPro" id="IPR018268">
    <property type="entry name" value="Ribosomal_uS10_CS"/>
</dbReference>
<dbReference type="InterPro" id="IPR027486">
    <property type="entry name" value="Ribosomal_uS10_dom"/>
</dbReference>
<dbReference type="InterPro" id="IPR036838">
    <property type="entry name" value="Ribosomal_uS10_dom_sf"/>
</dbReference>
<dbReference type="NCBIfam" id="NF001861">
    <property type="entry name" value="PRK00596.1"/>
    <property type="match status" value="1"/>
</dbReference>
<dbReference type="NCBIfam" id="TIGR01049">
    <property type="entry name" value="rpsJ_bact"/>
    <property type="match status" value="1"/>
</dbReference>
<dbReference type="PANTHER" id="PTHR11700">
    <property type="entry name" value="30S RIBOSOMAL PROTEIN S10 FAMILY MEMBER"/>
    <property type="match status" value="1"/>
</dbReference>
<dbReference type="Pfam" id="PF00338">
    <property type="entry name" value="Ribosomal_S10"/>
    <property type="match status" value="1"/>
</dbReference>
<dbReference type="PRINTS" id="PR00971">
    <property type="entry name" value="RIBOSOMALS10"/>
</dbReference>
<dbReference type="SMART" id="SM01403">
    <property type="entry name" value="Ribosomal_S10"/>
    <property type="match status" value="1"/>
</dbReference>
<dbReference type="SUPFAM" id="SSF54999">
    <property type="entry name" value="Ribosomal protein S10"/>
    <property type="match status" value="1"/>
</dbReference>
<dbReference type="PROSITE" id="PS00361">
    <property type="entry name" value="RIBOSOMAL_S10"/>
    <property type="match status" value="1"/>
</dbReference>
<protein>
    <recommendedName>
        <fullName evidence="1">Small ribosomal subunit protein uS10</fullName>
    </recommendedName>
    <alternativeName>
        <fullName evidence="2">30S ribosomal protein S10</fullName>
    </alternativeName>
</protein>
<name>RS10_PROM9</name>
<evidence type="ECO:0000255" key="1">
    <source>
        <dbReference type="HAMAP-Rule" id="MF_00508"/>
    </source>
</evidence>
<evidence type="ECO:0000305" key="2"/>
<keyword id="KW-0687">Ribonucleoprotein</keyword>
<keyword id="KW-0689">Ribosomal protein</keyword>
<gene>
    <name evidence="1" type="primary">rpsJ</name>
    <name evidence="1" type="synonym">rps10</name>
    <name type="ordered locus">PMT9312_1599</name>
</gene>
<organism>
    <name type="scientific">Prochlorococcus marinus (strain MIT 9312)</name>
    <dbReference type="NCBI Taxonomy" id="74546"/>
    <lineage>
        <taxon>Bacteria</taxon>
        <taxon>Bacillati</taxon>
        <taxon>Cyanobacteriota</taxon>
        <taxon>Cyanophyceae</taxon>
        <taxon>Synechococcales</taxon>
        <taxon>Prochlorococcaceae</taxon>
        <taxon>Prochlorococcus</taxon>
    </lineage>
</organism>
<reference key="1">
    <citation type="journal article" date="2006" name="Science">
        <title>Genomic islands and the ecology and evolution of Prochlorococcus.</title>
        <authorList>
            <person name="Coleman M.L."/>
            <person name="Sullivan M.B."/>
            <person name="Martiny A.C."/>
            <person name="Steglich C."/>
            <person name="Barry K."/>
            <person name="Delong E.F."/>
            <person name="Chisholm S.W."/>
        </authorList>
    </citation>
    <scope>NUCLEOTIDE SEQUENCE [LARGE SCALE GENOMIC DNA]</scope>
    <source>
        <strain>MIT 9312</strain>
    </source>
</reference>
<feature type="chain" id="PRO_0000237077" description="Small ribosomal subunit protein uS10">
    <location>
        <begin position="1"/>
        <end position="106"/>
    </location>
</feature>
<comment type="function">
    <text evidence="1">Involved in the binding of tRNA to the ribosomes.</text>
</comment>
<comment type="subunit">
    <text evidence="1">Part of the 30S ribosomal subunit.</text>
</comment>
<comment type="similarity">
    <text evidence="1">Belongs to the universal ribosomal protein uS10 family.</text>
</comment>
<sequence length="106" mass="12046">MTASIAQQKIRIRLKAFDRRMLDLSCEKIIQTADTTSASAIGPIPLPTKRKIYCVLRSPHVDKDSREHFETRTHRRLIDIYSPSAKTIDALMKLDLPSGVDIEVKL</sequence>